<keyword id="KW-0002">3D-structure</keyword>
<keyword id="KW-0045">Antibiotic biosynthesis</keyword>
<keyword id="KW-0903">Direct protein sequencing</keyword>
<keyword id="KW-0560">Oxidoreductase</keyword>
<keyword id="KW-0575">Peroxidase</keyword>
<evidence type="ECO:0000255" key="1"/>
<evidence type="ECO:0000269" key="2">
    <source>
    </source>
</evidence>
<evidence type="ECO:0000303" key="3">
    <source>
    </source>
</evidence>
<evidence type="ECO:0000303" key="4">
    <source>
    </source>
</evidence>
<evidence type="ECO:0000303" key="5">
    <source>
    </source>
</evidence>
<evidence type="ECO:0000305" key="6"/>
<evidence type="ECO:0007829" key="7">
    <source>
        <dbReference type="PDB" id="1A8Q"/>
    </source>
</evidence>
<feature type="initiator methionine" description="Removed" evidence="2">
    <location>
        <position position="1"/>
    </location>
</feature>
<feature type="chain" id="PRO_0000207066" description="Non-heme chloroperoxidase CPO-A1">
    <location>
        <begin position="2"/>
        <end position="275"/>
    </location>
</feature>
<feature type="domain" description="AB hydrolase-1" evidence="1">
    <location>
        <begin position="22"/>
        <end position="255"/>
    </location>
</feature>
<feature type="active site" description="Charge relay system" evidence="6">
    <location>
        <position position="95"/>
    </location>
</feature>
<feature type="active site" description="Charge relay system" evidence="6">
    <location>
        <position position="224"/>
    </location>
</feature>
<feature type="active site" description="Charge relay system" evidence="6">
    <location>
        <position position="253"/>
    </location>
</feature>
<feature type="sequence conflict" description="In Ref. 2; AA sequence." evidence="6" ref="2">
    <original>C</original>
    <variation>S</variation>
    <location>
        <position position="4"/>
    </location>
</feature>
<feature type="sequence conflict" description="In Ref. 2; AA sequence." evidence="6" ref="2">
    <original>W</original>
    <variation>D</variation>
    <location>
        <position position="17"/>
    </location>
</feature>
<feature type="strand" evidence="7">
    <location>
        <begin position="3"/>
        <end position="5"/>
    </location>
</feature>
<feature type="strand" evidence="7">
    <location>
        <begin position="11"/>
        <end position="17"/>
    </location>
</feature>
<feature type="strand" evidence="7">
    <location>
        <begin position="19"/>
        <end position="26"/>
    </location>
</feature>
<feature type="helix" evidence="7">
    <location>
        <begin position="33"/>
        <end position="36"/>
    </location>
</feature>
<feature type="helix" evidence="7">
    <location>
        <begin position="37"/>
        <end position="45"/>
    </location>
</feature>
<feature type="strand" evidence="7">
    <location>
        <begin position="49"/>
        <end position="53"/>
    </location>
</feature>
<feature type="helix" evidence="7">
    <location>
        <begin position="70"/>
        <end position="83"/>
    </location>
</feature>
<feature type="strand" evidence="7">
    <location>
        <begin position="88"/>
        <end position="94"/>
    </location>
</feature>
<feature type="helix" evidence="7">
    <location>
        <begin position="97"/>
        <end position="108"/>
    </location>
</feature>
<feature type="strand" evidence="7">
    <location>
        <begin position="113"/>
        <end position="120"/>
    </location>
</feature>
<feature type="helix" evidence="7">
    <location>
        <begin position="138"/>
        <end position="163"/>
    </location>
</feature>
<feature type="turn" evidence="7">
    <location>
        <begin position="164"/>
        <end position="167"/>
    </location>
</feature>
<feature type="helix" evidence="7">
    <location>
        <begin position="175"/>
        <end position="185"/>
    </location>
</feature>
<feature type="helix" evidence="7">
    <location>
        <begin position="190"/>
        <end position="202"/>
    </location>
</feature>
<feature type="helix" evidence="7">
    <location>
        <begin position="206"/>
        <end position="209"/>
    </location>
</feature>
<feature type="strand" evidence="7">
    <location>
        <begin position="216"/>
        <end position="221"/>
    </location>
</feature>
<feature type="strand" evidence="7">
    <location>
        <begin position="225"/>
        <end position="227"/>
    </location>
</feature>
<feature type="helix" evidence="7">
    <location>
        <begin position="229"/>
        <end position="231"/>
    </location>
</feature>
<feature type="helix" evidence="7">
    <location>
        <begin position="233"/>
        <end position="239"/>
    </location>
</feature>
<feature type="strand" evidence="7">
    <location>
        <begin position="244"/>
        <end position="248"/>
    </location>
</feature>
<feature type="turn" evidence="7">
    <location>
        <begin position="253"/>
        <end position="257"/>
    </location>
</feature>
<feature type="helix" evidence="7">
    <location>
        <begin position="261"/>
        <end position="273"/>
    </location>
</feature>
<sequence>MPICTTRDGVEIFYKDWGQGRPVVFIHGWPLNGDAWQDQLKAVVDAGYRGIAHDRRGHGHSTPVWDGYDFDTFADDLNDLLTDLDLRDVTLVAHSMGGGELARYVGRHGTGRLRSAVLLSAIPPVMIKSDKNPDGVPDEVFDALKNGVLTERSQFWKDTAEGFFSANRPGNKVTQGNKDAFWYMAMAQTIEGGVRCVDAFGYTDFTEDLKKFDIPTLVVHGDDDQVVPIDATGRKSAQIIPNAELKVYEGSSHGIAMVPGDKEKFNRDLLEFLNK</sequence>
<proteinExistence type="evidence at protein level"/>
<name>CPOA1_KITAU</name>
<dbReference type="EC" id="1.11.1.-"/>
<dbReference type="EMBL" id="U01096">
    <property type="protein sequence ID" value="AAC43253.1"/>
    <property type="molecule type" value="Genomic_DNA"/>
</dbReference>
<dbReference type="PIR" id="S59929">
    <property type="entry name" value="S59929"/>
</dbReference>
<dbReference type="RefSeq" id="WP_030556552.1">
    <property type="nucleotide sequence ID" value="NZ_BMUB01000015.1"/>
</dbReference>
<dbReference type="PDB" id="1A8Q">
    <property type="method" value="X-ray"/>
    <property type="resolution" value="1.75 A"/>
    <property type="chains" value="A=2-275"/>
</dbReference>
<dbReference type="PDBsum" id="1A8Q"/>
<dbReference type="SMR" id="P33912"/>
<dbReference type="ESTHER" id="strau-brpa1">
    <property type="family name" value="Haloperoxidase"/>
</dbReference>
<dbReference type="PeroxiBase" id="5911">
    <property type="entry name" value="STaHalNPrx01"/>
</dbReference>
<dbReference type="GeneID" id="97488359"/>
<dbReference type="eggNOG" id="COG2267">
    <property type="taxonomic scope" value="Bacteria"/>
</dbReference>
<dbReference type="OrthoDB" id="9785847at2"/>
<dbReference type="EvolutionaryTrace" id="P33912"/>
<dbReference type="GO" id="GO:0004601">
    <property type="term" value="F:peroxidase activity"/>
    <property type="evidence" value="ECO:0007669"/>
    <property type="project" value="UniProtKB-KW"/>
</dbReference>
<dbReference type="GO" id="GO:0017000">
    <property type="term" value="P:antibiotic biosynthetic process"/>
    <property type="evidence" value="ECO:0007669"/>
    <property type="project" value="UniProtKB-KW"/>
</dbReference>
<dbReference type="FunFam" id="3.40.50.1820:FF:000205">
    <property type="entry name" value="Non-haem bromoperoxidase BPO-A2"/>
    <property type="match status" value="1"/>
</dbReference>
<dbReference type="Gene3D" id="3.40.50.1820">
    <property type="entry name" value="alpha/beta hydrolase"/>
    <property type="match status" value="1"/>
</dbReference>
<dbReference type="InterPro" id="IPR050471">
    <property type="entry name" value="AB_hydrolase"/>
</dbReference>
<dbReference type="InterPro" id="IPR000073">
    <property type="entry name" value="AB_hydrolase_1"/>
</dbReference>
<dbReference type="InterPro" id="IPR029058">
    <property type="entry name" value="AB_hydrolase_fold"/>
</dbReference>
<dbReference type="InterPro" id="IPR000639">
    <property type="entry name" value="Epox_hydrolase-like"/>
</dbReference>
<dbReference type="PANTHER" id="PTHR43433">
    <property type="entry name" value="HYDROLASE, ALPHA/BETA FOLD FAMILY PROTEIN"/>
    <property type="match status" value="1"/>
</dbReference>
<dbReference type="PANTHER" id="PTHR43433:SF3">
    <property type="entry name" value="NON-HEME CHLOROPEROXIDASE"/>
    <property type="match status" value="1"/>
</dbReference>
<dbReference type="Pfam" id="PF00561">
    <property type="entry name" value="Abhydrolase_1"/>
    <property type="match status" value="1"/>
</dbReference>
<dbReference type="PRINTS" id="PR00111">
    <property type="entry name" value="ABHYDROLASE"/>
</dbReference>
<dbReference type="PRINTS" id="PR00412">
    <property type="entry name" value="EPOXHYDRLASE"/>
</dbReference>
<dbReference type="SUPFAM" id="SSF53474">
    <property type="entry name" value="alpha/beta-Hydrolases"/>
    <property type="match status" value="1"/>
</dbReference>
<protein>
    <recommendedName>
        <fullName evidence="5">Non-heme chloroperoxidase CPO-A1</fullName>
        <shortName>CPO-A1</shortName>
        <ecNumber>1.11.1.-</ecNumber>
    </recommendedName>
    <alternativeName>
        <fullName evidence="3">BPO1</fullName>
    </alternativeName>
    <alternativeName>
        <fullName>Bromide peroxidase</fullName>
    </alternativeName>
    <alternativeName>
        <fullName evidence="4">Non-haem bromoperoxidase BPO-A1</fullName>
    </alternativeName>
</protein>
<organism>
    <name type="scientific">Kitasatospora aureofaciens</name>
    <name type="common">Streptomyces aureofaciens</name>
    <dbReference type="NCBI Taxonomy" id="1894"/>
    <lineage>
        <taxon>Bacteria</taxon>
        <taxon>Bacillati</taxon>
        <taxon>Actinomycetota</taxon>
        <taxon>Actinomycetes</taxon>
        <taxon>Kitasatosporales</taxon>
        <taxon>Streptomycetaceae</taxon>
        <taxon>Kitasatospora</taxon>
    </lineage>
</organism>
<comment type="function">
    <text evidence="2">May be a chlorinating enzyme involved in 7-chlorotetracycline biosynthesis. Able to brominate as well.</text>
</comment>
<comment type="activity regulation">
    <text evidence="2">Brominating activity not inhibited by azide, peroxidase activity stimulated by bromide.</text>
</comment>
<comment type="subunit">
    <text evidence="2">Homodimer.</text>
</comment>
<comment type="similarity">
    <text evidence="6">Belongs to the AB hydrolase superfamily. Bacterial non-heme haloperoxidase / perhydrolase family.</text>
</comment>
<gene>
    <name type="primary">bpoA1</name>
</gene>
<reference key="1">
    <citation type="journal article" date="1994" name="Microbiology">
        <title>Cloning of a second non-haem bromoperoxidase gene from Streptomyces aureofaciens ATCC 10762: sequence analysis, expression in Streptomyces lividans and enzyme purification.</title>
        <authorList>
            <person name="Pelletier I."/>
            <person name="Pfeifer O."/>
            <person name="Altenbuchner J."/>
            <person name="van Pee K.-P."/>
        </authorList>
    </citation>
    <scope>NUCLEOTIDE SEQUENCE [GENOMIC DNA]</scope>
    <source>
        <strain>ATCC 10762 / DSM 40127 / CCM 3239 / JCM 4008 / LMG 5968 / NBRC 12843 / NCIMB 8234 / A-377</strain>
    </source>
</reference>
<reference key="2">
    <citation type="journal article" date="1991" name="J. Gen. Microbiol.">
        <title>Purification, characterization and comparison of two non-haem bromoperoxidases from Streptomyces aureofaciens ATCC 10762.</title>
        <authorList>
            <person name="Weng M."/>
            <person name="Pfeifer O."/>
            <person name="Krauss S."/>
            <person name="Lingens F."/>
            <person name="van Pee K.-H."/>
        </authorList>
    </citation>
    <scope>PROTEIN SEQUENCE OF 2-21</scope>
    <scope>FUNCTION</scope>
    <scope>ACTIVITY REGULATION</scope>
    <scope>SUBUNIT</scope>
    <source>
        <strain>ATCC 10762 / DSM 40127 / CCM 3239 / JCM 4008 / LMG 5968 / NBRC 12843 / NCIMB 8234 / A-377</strain>
    </source>
</reference>
<reference key="3">
    <citation type="journal article" date="1998" name="J. Mol. Biol.">
        <title>Structural investigation of the cofactor-free chloroperoxidases.</title>
        <authorList>
            <person name="Hofmann B."/>
            <person name="Tolzer S."/>
            <person name="Pelletier I."/>
            <person name="Altenbuchner J."/>
            <person name="van Pee K.-H."/>
            <person name="Hecht H.-J."/>
        </authorList>
    </citation>
    <scope>X-RAY CRYSTALLOGRAPHY (1.75 ANGSTROMS) OF 2-275</scope>
    <scope>PROBABLE CATALYTIC ACTIVITY</scope>
</reference>
<accession>P33912</accession>